<name>RS9_DEIRA</name>
<feature type="chain" id="PRO_0000111353" description="Small ribosomal subunit protein uS9">
    <location>
        <begin position="1"/>
        <end position="133"/>
    </location>
</feature>
<feature type="region of interest" description="Disordered" evidence="2">
    <location>
        <begin position="101"/>
        <end position="133"/>
    </location>
</feature>
<feature type="compositionally biased region" description="Basic and acidic residues" evidence="2">
    <location>
        <begin position="107"/>
        <end position="118"/>
    </location>
</feature>
<feature type="compositionally biased region" description="Basic residues" evidence="2">
    <location>
        <begin position="119"/>
        <end position="133"/>
    </location>
</feature>
<keyword id="KW-1185">Reference proteome</keyword>
<keyword id="KW-0687">Ribonucleoprotein</keyword>
<keyword id="KW-0689">Ribosomal protein</keyword>
<evidence type="ECO:0000255" key="1">
    <source>
        <dbReference type="HAMAP-Rule" id="MF_00532"/>
    </source>
</evidence>
<evidence type="ECO:0000256" key="2">
    <source>
        <dbReference type="SAM" id="MobiDB-lite"/>
    </source>
</evidence>
<evidence type="ECO:0000305" key="3"/>
<accession>Q9RXY0</accession>
<organism>
    <name type="scientific">Deinococcus radiodurans (strain ATCC 13939 / DSM 20539 / JCM 16871 / CCUG 27074 / LMG 4051 / NBRC 15346 / NCIMB 9279 / VKM B-1422 / R1)</name>
    <dbReference type="NCBI Taxonomy" id="243230"/>
    <lineage>
        <taxon>Bacteria</taxon>
        <taxon>Thermotogati</taxon>
        <taxon>Deinococcota</taxon>
        <taxon>Deinococci</taxon>
        <taxon>Deinococcales</taxon>
        <taxon>Deinococcaceae</taxon>
        <taxon>Deinococcus</taxon>
    </lineage>
</organism>
<sequence>MAIQQPEQYYGTGRRKAAVARVFLRPGEGKIVVNGKEFQTYFRGLLRAVNALQGFRETGTAGRFDAVITVTGGGPSGQADAIKLGIARALLKVNPDFRAQMKPKGLLTRDPREVERKKYGLKKARRAPQFSKR</sequence>
<comment type="similarity">
    <text evidence="1">Belongs to the universal ribosomal protein uS9 family.</text>
</comment>
<dbReference type="EMBL" id="AE000513">
    <property type="protein sequence ID" value="AAF09761.1"/>
    <property type="molecule type" value="Genomic_DNA"/>
</dbReference>
<dbReference type="PIR" id="F75552">
    <property type="entry name" value="F75552"/>
</dbReference>
<dbReference type="RefSeq" id="NP_293899.1">
    <property type="nucleotide sequence ID" value="NC_001263.1"/>
</dbReference>
<dbReference type="RefSeq" id="WP_010886821.1">
    <property type="nucleotide sequence ID" value="NZ_JMLF01000012.1"/>
</dbReference>
<dbReference type="SMR" id="Q9RXY0"/>
<dbReference type="FunCoup" id="Q9RXY0">
    <property type="interactions" value="517"/>
</dbReference>
<dbReference type="STRING" id="243230.DR_0175"/>
<dbReference type="PaxDb" id="243230-DR_0175"/>
<dbReference type="EnsemblBacteria" id="AAF09761">
    <property type="protein sequence ID" value="AAF09761"/>
    <property type="gene ID" value="DR_0175"/>
</dbReference>
<dbReference type="GeneID" id="69516406"/>
<dbReference type="KEGG" id="dra:DR_0175"/>
<dbReference type="PATRIC" id="fig|243230.17.peg.339"/>
<dbReference type="eggNOG" id="COG0103">
    <property type="taxonomic scope" value="Bacteria"/>
</dbReference>
<dbReference type="HOGENOM" id="CLU_046483_2_1_0"/>
<dbReference type="InParanoid" id="Q9RXY0"/>
<dbReference type="OrthoDB" id="9803965at2"/>
<dbReference type="Proteomes" id="UP000002524">
    <property type="component" value="Chromosome 1"/>
</dbReference>
<dbReference type="GO" id="GO:0022627">
    <property type="term" value="C:cytosolic small ribosomal subunit"/>
    <property type="evidence" value="ECO:0000318"/>
    <property type="project" value="GO_Central"/>
</dbReference>
<dbReference type="GO" id="GO:0003723">
    <property type="term" value="F:RNA binding"/>
    <property type="evidence" value="ECO:0000318"/>
    <property type="project" value="GO_Central"/>
</dbReference>
<dbReference type="GO" id="GO:0003735">
    <property type="term" value="F:structural constituent of ribosome"/>
    <property type="evidence" value="ECO:0000318"/>
    <property type="project" value="GO_Central"/>
</dbReference>
<dbReference type="GO" id="GO:0006412">
    <property type="term" value="P:translation"/>
    <property type="evidence" value="ECO:0007669"/>
    <property type="project" value="UniProtKB-UniRule"/>
</dbReference>
<dbReference type="FunFam" id="3.30.230.10:FF:000001">
    <property type="entry name" value="30S ribosomal protein S9"/>
    <property type="match status" value="1"/>
</dbReference>
<dbReference type="Gene3D" id="3.30.230.10">
    <property type="match status" value="1"/>
</dbReference>
<dbReference type="HAMAP" id="MF_00532_B">
    <property type="entry name" value="Ribosomal_uS9_B"/>
    <property type="match status" value="1"/>
</dbReference>
<dbReference type="InterPro" id="IPR020568">
    <property type="entry name" value="Ribosomal_Su5_D2-typ_SF"/>
</dbReference>
<dbReference type="InterPro" id="IPR000754">
    <property type="entry name" value="Ribosomal_uS9"/>
</dbReference>
<dbReference type="InterPro" id="IPR023035">
    <property type="entry name" value="Ribosomal_uS9_bac/plastid"/>
</dbReference>
<dbReference type="InterPro" id="IPR020574">
    <property type="entry name" value="Ribosomal_uS9_CS"/>
</dbReference>
<dbReference type="InterPro" id="IPR014721">
    <property type="entry name" value="Ribsml_uS5_D2-typ_fold_subgr"/>
</dbReference>
<dbReference type="NCBIfam" id="NF001099">
    <property type="entry name" value="PRK00132.1"/>
    <property type="match status" value="1"/>
</dbReference>
<dbReference type="PANTHER" id="PTHR21569">
    <property type="entry name" value="RIBOSOMAL PROTEIN S9"/>
    <property type="match status" value="1"/>
</dbReference>
<dbReference type="PANTHER" id="PTHR21569:SF1">
    <property type="entry name" value="SMALL RIBOSOMAL SUBUNIT PROTEIN US9M"/>
    <property type="match status" value="1"/>
</dbReference>
<dbReference type="Pfam" id="PF00380">
    <property type="entry name" value="Ribosomal_S9"/>
    <property type="match status" value="1"/>
</dbReference>
<dbReference type="SUPFAM" id="SSF54211">
    <property type="entry name" value="Ribosomal protein S5 domain 2-like"/>
    <property type="match status" value="1"/>
</dbReference>
<dbReference type="PROSITE" id="PS00360">
    <property type="entry name" value="RIBOSOMAL_S9"/>
    <property type="match status" value="1"/>
</dbReference>
<proteinExistence type="inferred from homology"/>
<gene>
    <name evidence="1" type="primary">rpsI</name>
    <name type="ordered locus">DR_0175</name>
</gene>
<reference key="1">
    <citation type="journal article" date="1999" name="Science">
        <title>Genome sequence of the radioresistant bacterium Deinococcus radiodurans R1.</title>
        <authorList>
            <person name="White O."/>
            <person name="Eisen J.A."/>
            <person name="Heidelberg J.F."/>
            <person name="Hickey E.K."/>
            <person name="Peterson J.D."/>
            <person name="Dodson R.J."/>
            <person name="Haft D.H."/>
            <person name="Gwinn M.L."/>
            <person name="Nelson W.C."/>
            <person name="Richardson D.L."/>
            <person name="Moffat K.S."/>
            <person name="Qin H."/>
            <person name="Jiang L."/>
            <person name="Pamphile W."/>
            <person name="Crosby M."/>
            <person name="Shen M."/>
            <person name="Vamathevan J.J."/>
            <person name="Lam P."/>
            <person name="McDonald L.A."/>
            <person name="Utterback T.R."/>
            <person name="Zalewski C."/>
            <person name="Makarova K.S."/>
            <person name="Aravind L."/>
            <person name="Daly M.J."/>
            <person name="Minton K.W."/>
            <person name="Fleischmann R.D."/>
            <person name="Ketchum K.A."/>
            <person name="Nelson K.E."/>
            <person name="Salzberg S.L."/>
            <person name="Smith H.O."/>
            <person name="Venter J.C."/>
            <person name="Fraser C.M."/>
        </authorList>
    </citation>
    <scope>NUCLEOTIDE SEQUENCE [LARGE SCALE GENOMIC DNA]</scope>
    <source>
        <strain>ATCC 13939 / DSM 20539 / JCM 16871 / CCUG 27074 / LMG 4051 / NBRC 15346 / NCIMB 9279 / VKM B-1422 / R1</strain>
    </source>
</reference>
<protein>
    <recommendedName>
        <fullName evidence="1">Small ribosomal subunit protein uS9</fullName>
    </recommendedName>
    <alternativeName>
        <fullName evidence="3">30S ribosomal protein S9</fullName>
    </alternativeName>
</protein>